<name>FNR_PASMU</name>
<keyword id="KW-0004">4Fe-4S</keyword>
<keyword id="KW-0010">Activator</keyword>
<keyword id="KW-0963">Cytoplasm</keyword>
<keyword id="KW-0238">DNA-binding</keyword>
<keyword id="KW-0408">Iron</keyword>
<keyword id="KW-0411">Iron-sulfur</keyword>
<keyword id="KW-0479">Metal-binding</keyword>
<keyword id="KW-1185">Reference proteome</keyword>
<keyword id="KW-0678">Repressor</keyword>
<keyword id="KW-0804">Transcription</keyword>
<keyword id="KW-0805">Transcription regulation</keyword>
<dbReference type="EMBL" id="AE004439">
    <property type="protein sequence ID" value="AAK02752.1"/>
    <property type="molecule type" value="Genomic_DNA"/>
</dbReference>
<dbReference type="SMR" id="Q9CMY2"/>
<dbReference type="STRING" id="272843.PM0668"/>
<dbReference type="EnsemblBacteria" id="AAK02752">
    <property type="protein sequence ID" value="AAK02752"/>
    <property type="gene ID" value="PM0668"/>
</dbReference>
<dbReference type="KEGG" id="pmu:PM0668"/>
<dbReference type="HOGENOM" id="CLU_075053_0_2_6"/>
<dbReference type="Proteomes" id="UP000000809">
    <property type="component" value="Chromosome"/>
</dbReference>
<dbReference type="GO" id="GO:0005829">
    <property type="term" value="C:cytosol"/>
    <property type="evidence" value="ECO:0007669"/>
    <property type="project" value="TreeGrafter"/>
</dbReference>
<dbReference type="GO" id="GO:0051539">
    <property type="term" value="F:4 iron, 4 sulfur cluster binding"/>
    <property type="evidence" value="ECO:0007669"/>
    <property type="project" value="UniProtKB-KW"/>
</dbReference>
<dbReference type="GO" id="GO:0003677">
    <property type="term" value="F:DNA binding"/>
    <property type="evidence" value="ECO:0007669"/>
    <property type="project" value="UniProtKB-KW"/>
</dbReference>
<dbReference type="GO" id="GO:0003700">
    <property type="term" value="F:DNA-binding transcription factor activity"/>
    <property type="evidence" value="ECO:0007669"/>
    <property type="project" value="InterPro"/>
</dbReference>
<dbReference type="GO" id="GO:0046872">
    <property type="term" value="F:metal ion binding"/>
    <property type="evidence" value="ECO:0007669"/>
    <property type="project" value="UniProtKB-KW"/>
</dbReference>
<dbReference type="CDD" id="cd00038">
    <property type="entry name" value="CAP_ED"/>
    <property type="match status" value="1"/>
</dbReference>
<dbReference type="CDD" id="cd00092">
    <property type="entry name" value="HTH_CRP"/>
    <property type="match status" value="1"/>
</dbReference>
<dbReference type="FunFam" id="1.10.10.10:FF:000028">
    <property type="entry name" value="Fumarate/nitrate reduction transcriptional regulator Fnr"/>
    <property type="match status" value="1"/>
</dbReference>
<dbReference type="FunFam" id="2.60.120.10:FF:000004">
    <property type="entry name" value="Fumarate/nitrate reduction transcriptional regulator Fnr"/>
    <property type="match status" value="1"/>
</dbReference>
<dbReference type="Gene3D" id="2.60.120.10">
    <property type="entry name" value="Jelly Rolls"/>
    <property type="match status" value="1"/>
</dbReference>
<dbReference type="Gene3D" id="1.10.10.10">
    <property type="entry name" value="Winged helix-like DNA-binding domain superfamily/Winged helix DNA-binding domain"/>
    <property type="match status" value="1"/>
</dbReference>
<dbReference type="InterPro" id="IPR000595">
    <property type="entry name" value="cNMP-bd_dom"/>
</dbReference>
<dbReference type="InterPro" id="IPR018490">
    <property type="entry name" value="cNMP-bd_dom_sf"/>
</dbReference>
<dbReference type="InterPro" id="IPR050397">
    <property type="entry name" value="Env_Response_Regulators"/>
</dbReference>
<dbReference type="InterPro" id="IPR012318">
    <property type="entry name" value="HTH_CRP"/>
</dbReference>
<dbReference type="InterPro" id="IPR014710">
    <property type="entry name" value="RmlC-like_jellyroll"/>
</dbReference>
<dbReference type="InterPro" id="IPR018335">
    <property type="entry name" value="Tscrpt_reg_HTH_Crp-type_CS"/>
</dbReference>
<dbReference type="InterPro" id="IPR036388">
    <property type="entry name" value="WH-like_DNA-bd_sf"/>
</dbReference>
<dbReference type="InterPro" id="IPR036390">
    <property type="entry name" value="WH_DNA-bd_sf"/>
</dbReference>
<dbReference type="NCBIfam" id="NF008365">
    <property type="entry name" value="PRK11161.1"/>
    <property type="match status" value="1"/>
</dbReference>
<dbReference type="PANTHER" id="PTHR24567">
    <property type="entry name" value="CRP FAMILY TRANSCRIPTIONAL REGULATORY PROTEIN"/>
    <property type="match status" value="1"/>
</dbReference>
<dbReference type="PANTHER" id="PTHR24567:SF75">
    <property type="entry name" value="FUMARATE AND NITRATE REDUCTION REGULATORY PROTEIN"/>
    <property type="match status" value="1"/>
</dbReference>
<dbReference type="Pfam" id="PF00027">
    <property type="entry name" value="cNMP_binding"/>
    <property type="match status" value="1"/>
</dbReference>
<dbReference type="Pfam" id="PF13545">
    <property type="entry name" value="HTH_Crp_2"/>
    <property type="match status" value="1"/>
</dbReference>
<dbReference type="PRINTS" id="PR00034">
    <property type="entry name" value="HTHCRP"/>
</dbReference>
<dbReference type="SMART" id="SM00100">
    <property type="entry name" value="cNMP"/>
    <property type="match status" value="1"/>
</dbReference>
<dbReference type="SMART" id="SM00419">
    <property type="entry name" value="HTH_CRP"/>
    <property type="match status" value="1"/>
</dbReference>
<dbReference type="SUPFAM" id="SSF51206">
    <property type="entry name" value="cAMP-binding domain-like"/>
    <property type="match status" value="1"/>
</dbReference>
<dbReference type="SUPFAM" id="SSF46785">
    <property type="entry name" value="Winged helix' DNA-binding domain"/>
    <property type="match status" value="1"/>
</dbReference>
<dbReference type="PROSITE" id="PS50042">
    <property type="entry name" value="CNMP_BINDING_3"/>
    <property type="match status" value="1"/>
</dbReference>
<dbReference type="PROSITE" id="PS00042">
    <property type="entry name" value="HTH_CRP_1"/>
    <property type="match status" value="1"/>
</dbReference>
<dbReference type="PROSITE" id="PS51063">
    <property type="entry name" value="HTH_CRP_2"/>
    <property type="match status" value="1"/>
</dbReference>
<organism>
    <name type="scientific">Pasteurella multocida (strain Pm70)</name>
    <dbReference type="NCBI Taxonomy" id="272843"/>
    <lineage>
        <taxon>Bacteria</taxon>
        <taxon>Pseudomonadati</taxon>
        <taxon>Pseudomonadota</taxon>
        <taxon>Gammaproteobacteria</taxon>
        <taxon>Pasteurellales</taxon>
        <taxon>Pasteurellaceae</taxon>
        <taxon>Pasteurella</taxon>
    </lineage>
</organism>
<gene>
    <name type="primary">fnr</name>
    <name type="ordered locus">PM0668</name>
</gene>
<reference key="1">
    <citation type="journal article" date="2001" name="Proc. Natl. Acad. Sci. U.S.A.">
        <title>Complete genomic sequence of Pasteurella multocida Pm70.</title>
        <authorList>
            <person name="May B.J."/>
            <person name="Zhang Q."/>
            <person name="Li L.L."/>
            <person name="Paustian M.L."/>
            <person name="Whittam T.S."/>
            <person name="Kapur V."/>
        </authorList>
    </citation>
    <scope>NUCLEOTIDE SEQUENCE [LARGE SCALE GENOMIC DNA]</scope>
    <source>
        <strain>Pm70</strain>
    </source>
</reference>
<comment type="function">
    <text>It is involved in the activation of genes necessary for anaerobic respiration.</text>
</comment>
<comment type="cofactor">
    <cofactor evidence="1">
        <name>[4Fe-4S] cluster</name>
        <dbReference type="ChEBI" id="CHEBI:49883"/>
    </cofactor>
    <text evidence="1">Binds 1 [4Fe-4S] cluster per subunit.</text>
</comment>
<comment type="subunit">
    <text evidence="1">Homodimer.</text>
</comment>
<comment type="subcellular location">
    <subcellularLocation>
        <location evidence="4">Cytoplasm</location>
    </subcellularLocation>
</comment>
<evidence type="ECO:0000250" key="1"/>
<evidence type="ECO:0000255" key="2"/>
<evidence type="ECO:0000255" key="3">
    <source>
        <dbReference type="PROSITE-ProRule" id="PRU00387"/>
    </source>
</evidence>
<evidence type="ECO:0000305" key="4"/>
<accession>Q9CMY2</accession>
<feature type="chain" id="PRO_0000100178" description="Anaerobic regulatory protein">
    <location>
        <begin position="1"/>
        <end position="273"/>
    </location>
</feature>
<feature type="domain" description="HTH crp-type" evidence="3">
    <location>
        <begin position="183"/>
        <end position="256"/>
    </location>
</feature>
<feature type="DNA-binding region" description="H-T-H motif" evidence="3">
    <location>
        <begin position="216"/>
        <end position="235"/>
    </location>
</feature>
<feature type="region of interest" description="Essential for the oxygen-regulated activity" evidence="1">
    <location>
        <begin position="39"/>
        <end position="48"/>
    </location>
</feature>
<feature type="region of interest" description="Dimerization" evidence="2">
    <location>
        <begin position="159"/>
        <end position="178"/>
    </location>
</feature>
<feature type="binding site" evidence="2">
    <location>
        <position position="39"/>
    </location>
    <ligand>
        <name>[4Fe-4S] cluster</name>
        <dbReference type="ChEBI" id="CHEBI:49883"/>
    </ligand>
</feature>
<feature type="binding site" evidence="2">
    <location>
        <position position="42"/>
    </location>
    <ligand>
        <name>[4Fe-4S] cluster</name>
        <dbReference type="ChEBI" id="CHEBI:49883"/>
    </ligand>
</feature>
<feature type="binding site" evidence="2">
    <location>
        <position position="48"/>
    </location>
    <ligand>
        <name>[4Fe-4S] cluster</name>
        <dbReference type="ChEBI" id="CHEBI:49883"/>
    </ligand>
</feature>
<feature type="binding site" evidence="2">
    <location>
        <position position="141"/>
    </location>
    <ligand>
        <name>[4Fe-4S] cluster</name>
        <dbReference type="ChEBI" id="CHEBI:49883"/>
    </ligand>
</feature>
<protein>
    <recommendedName>
        <fullName>Anaerobic regulatory protein</fullName>
    </recommendedName>
</protein>
<sequence>MILFEIDQFYIIFVVLIKVLFMDTKIGRKVQSGGCAIHCQDCSISQLCIPFTLNEQELDQLDNIIERKKPIQKSQVLFKAGDPLNSLYAIRSGTIKTYTISETGEEQITSFQLPGDLVGFDAIMNMQHPSFAQALETSMVCEIPFDILDDLSGKMPKLRQQIMRLMSNEIKNDQEMILLLSKMNAEERLAAFIYNLSRRYSARGFSAREFRLTMTRGDIGNYLGLTVETISRLLGRLQKMGILSVQGKYITINDMVALIELSGTTKTNIKMGI</sequence>
<proteinExistence type="inferred from homology"/>